<accession>Q6NH66</accession>
<sequence>MLPLPTWTLSDVDAILVLSFGGPEGQQDVIPFLENVTRGRGIPRERLEEVAVHYRHFGGISPLNALNREIIGNIIEVLSSRGLEIPVYFGNRNWHPFVNDTAEKMVRDGVRNVAVFATSAWGGYSGCRQYDEDIVRMNHHLEEKELPTLNCLKLRQFFDHPLFIEEMSSVVFQAARELGISALDELQLHQKVVFTAHSIPEVANENSGRKEDGPLYSRQVYEAASLVAKHLGISQERYDVVWQSASGNGQIPWLEPDILDYAKCQHDEGVSELVVAPIGFISDHMEVVWDLDHELQDLASDLGMSISRAATVGHTDSFATMIVELVEESLGVKPHQNLGTVPSKGCSFNGEPCEVNCCKPVQRPHSAKA</sequence>
<name>CPFC_CORDI</name>
<proteinExistence type="inferred from homology"/>
<keyword id="KW-0963">Cytoplasm</keyword>
<keyword id="KW-0350">Heme biosynthesis</keyword>
<keyword id="KW-0408">Iron</keyword>
<keyword id="KW-0456">Lyase</keyword>
<keyword id="KW-0479">Metal-binding</keyword>
<keyword id="KW-0627">Porphyrin biosynthesis</keyword>
<keyword id="KW-1185">Reference proteome</keyword>
<gene>
    <name evidence="1" type="primary">cpfC</name>
    <name type="ordered locus">DIP1280</name>
</gene>
<feature type="chain" id="PRO_0000175132" description="Coproporphyrin III ferrochelatase">
    <location>
        <begin position="1"/>
        <end position="369"/>
    </location>
</feature>
<feature type="binding site" evidence="1">
    <location>
        <position position="61"/>
    </location>
    <ligand>
        <name>Fe-coproporphyrin III</name>
        <dbReference type="ChEBI" id="CHEBI:68438"/>
    </ligand>
</feature>
<feature type="binding site" evidence="1">
    <location>
        <position position="130"/>
    </location>
    <ligand>
        <name>Fe-coproporphyrin III</name>
        <dbReference type="ChEBI" id="CHEBI:68438"/>
    </ligand>
</feature>
<feature type="binding site" evidence="1">
    <location>
        <position position="197"/>
    </location>
    <ligand>
        <name>Fe(2+)</name>
        <dbReference type="ChEBI" id="CHEBI:29033"/>
    </ligand>
</feature>
<feature type="binding site" evidence="1">
    <location>
        <position position="286"/>
    </location>
    <ligand>
        <name>Fe(2+)</name>
        <dbReference type="ChEBI" id="CHEBI:29033"/>
    </ligand>
</feature>
<comment type="function">
    <text evidence="1">Involved in coproporphyrin-dependent heme b biosynthesis. Catalyzes the insertion of ferrous iron into coproporphyrin III to form Fe-coproporphyrin III.</text>
</comment>
<comment type="catalytic activity">
    <reaction evidence="1">
        <text>Fe-coproporphyrin III + 2 H(+) = coproporphyrin III + Fe(2+)</text>
        <dbReference type="Rhea" id="RHEA:49572"/>
        <dbReference type="ChEBI" id="CHEBI:15378"/>
        <dbReference type="ChEBI" id="CHEBI:29033"/>
        <dbReference type="ChEBI" id="CHEBI:68438"/>
        <dbReference type="ChEBI" id="CHEBI:131725"/>
        <dbReference type="EC" id="4.99.1.9"/>
    </reaction>
    <physiologicalReaction direction="right-to-left" evidence="1">
        <dbReference type="Rhea" id="RHEA:49574"/>
    </physiologicalReaction>
</comment>
<comment type="pathway">
    <text evidence="1">Porphyrin-containing compound metabolism; protoheme biosynthesis.</text>
</comment>
<comment type="subcellular location">
    <subcellularLocation>
        <location evidence="1">Cytoplasm</location>
    </subcellularLocation>
</comment>
<comment type="similarity">
    <text evidence="1">Belongs to the ferrochelatase family.</text>
</comment>
<protein>
    <recommendedName>
        <fullName evidence="1">Coproporphyrin III ferrochelatase</fullName>
        <ecNumber evidence="1">4.99.1.9</ecNumber>
    </recommendedName>
</protein>
<evidence type="ECO:0000255" key="1">
    <source>
        <dbReference type="HAMAP-Rule" id="MF_00323"/>
    </source>
</evidence>
<dbReference type="EC" id="4.99.1.9" evidence="1"/>
<dbReference type="EMBL" id="BX248357">
    <property type="protein sequence ID" value="CAE49807.1"/>
    <property type="molecule type" value="Genomic_DNA"/>
</dbReference>
<dbReference type="SMR" id="Q6NH66"/>
<dbReference type="STRING" id="257309.DIP1280"/>
<dbReference type="KEGG" id="cdi:DIP1280"/>
<dbReference type="HOGENOM" id="CLU_018884_2_0_11"/>
<dbReference type="UniPathway" id="UPA00252"/>
<dbReference type="Proteomes" id="UP000002198">
    <property type="component" value="Chromosome"/>
</dbReference>
<dbReference type="GO" id="GO:0005737">
    <property type="term" value="C:cytoplasm"/>
    <property type="evidence" value="ECO:0007669"/>
    <property type="project" value="UniProtKB-SubCell"/>
</dbReference>
<dbReference type="GO" id="GO:0004325">
    <property type="term" value="F:ferrochelatase activity"/>
    <property type="evidence" value="ECO:0007669"/>
    <property type="project" value="UniProtKB-UniRule"/>
</dbReference>
<dbReference type="GO" id="GO:0046872">
    <property type="term" value="F:metal ion binding"/>
    <property type="evidence" value="ECO:0007669"/>
    <property type="project" value="UniProtKB-KW"/>
</dbReference>
<dbReference type="GO" id="GO:0006783">
    <property type="term" value="P:heme biosynthetic process"/>
    <property type="evidence" value="ECO:0007669"/>
    <property type="project" value="UniProtKB-UniRule"/>
</dbReference>
<dbReference type="CDD" id="cd00419">
    <property type="entry name" value="Ferrochelatase_C"/>
    <property type="match status" value="1"/>
</dbReference>
<dbReference type="CDD" id="cd03411">
    <property type="entry name" value="Ferrochelatase_N"/>
    <property type="match status" value="1"/>
</dbReference>
<dbReference type="Gene3D" id="3.40.50.1400">
    <property type="match status" value="2"/>
</dbReference>
<dbReference type="HAMAP" id="MF_00323">
    <property type="entry name" value="Ferrochelatase"/>
    <property type="match status" value="1"/>
</dbReference>
<dbReference type="InterPro" id="IPR001015">
    <property type="entry name" value="Ferrochelatase"/>
</dbReference>
<dbReference type="InterPro" id="IPR033644">
    <property type="entry name" value="Ferrochelatase_C"/>
</dbReference>
<dbReference type="InterPro" id="IPR033659">
    <property type="entry name" value="Ferrochelatase_N"/>
</dbReference>
<dbReference type="NCBIfam" id="NF000689">
    <property type="entry name" value="PRK00035.2-1"/>
    <property type="match status" value="1"/>
</dbReference>
<dbReference type="PANTHER" id="PTHR11108">
    <property type="entry name" value="FERROCHELATASE"/>
    <property type="match status" value="1"/>
</dbReference>
<dbReference type="PANTHER" id="PTHR11108:SF1">
    <property type="entry name" value="FERROCHELATASE, MITOCHONDRIAL"/>
    <property type="match status" value="1"/>
</dbReference>
<dbReference type="Pfam" id="PF00762">
    <property type="entry name" value="Ferrochelatase"/>
    <property type="match status" value="1"/>
</dbReference>
<dbReference type="SUPFAM" id="SSF53800">
    <property type="entry name" value="Chelatase"/>
    <property type="match status" value="1"/>
</dbReference>
<organism>
    <name type="scientific">Corynebacterium diphtheriae (strain ATCC 700971 / NCTC 13129 / Biotype gravis)</name>
    <dbReference type="NCBI Taxonomy" id="257309"/>
    <lineage>
        <taxon>Bacteria</taxon>
        <taxon>Bacillati</taxon>
        <taxon>Actinomycetota</taxon>
        <taxon>Actinomycetes</taxon>
        <taxon>Mycobacteriales</taxon>
        <taxon>Corynebacteriaceae</taxon>
        <taxon>Corynebacterium</taxon>
    </lineage>
</organism>
<reference key="1">
    <citation type="journal article" date="2003" name="Nucleic Acids Res.">
        <title>The complete genome sequence and analysis of Corynebacterium diphtheriae NCTC13129.</title>
        <authorList>
            <person name="Cerdeno-Tarraga A.-M."/>
            <person name="Efstratiou A."/>
            <person name="Dover L.G."/>
            <person name="Holden M.T.G."/>
            <person name="Pallen M.J."/>
            <person name="Bentley S.D."/>
            <person name="Besra G.S."/>
            <person name="Churcher C.M."/>
            <person name="James K.D."/>
            <person name="De Zoysa A."/>
            <person name="Chillingworth T."/>
            <person name="Cronin A."/>
            <person name="Dowd L."/>
            <person name="Feltwell T."/>
            <person name="Hamlin N."/>
            <person name="Holroyd S."/>
            <person name="Jagels K."/>
            <person name="Moule S."/>
            <person name="Quail M.A."/>
            <person name="Rabbinowitsch E."/>
            <person name="Rutherford K.M."/>
            <person name="Thomson N.R."/>
            <person name="Unwin L."/>
            <person name="Whitehead S."/>
            <person name="Barrell B.G."/>
            <person name="Parkhill J."/>
        </authorList>
    </citation>
    <scope>NUCLEOTIDE SEQUENCE [LARGE SCALE GENOMIC DNA]</scope>
    <source>
        <strain>ATCC 700971 / NCTC 13129 / Biotype gravis</strain>
    </source>
</reference>